<keyword id="KW-0158">Chromosome</keyword>
<keyword id="KW-0217">Developmental protein</keyword>
<keyword id="KW-0221">Differentiation</keyword>
<keyword id="KW-0226">DNA condensation</keyword>
<keyword id="KW-0238">DNA-binding</keyword>
<keyword id="KW-0544">Nucleosome core</keyword>
<keyword id="KW-0539">Nucleus</keyword>
<keyword id="KW-0744">Spermatogenesis</keyword>
<sequence length="62" mass="8522">MARYRRHSRSRSRSRYRRRRRRRSRGRRRRTYRRSRRHSRRRRGRRRGYSRRRYSRRGRRRY</sequence>
<gene>
    <name type="primary">PRM1</name>
</gene>
<protein>
    <recommendedName>
        <fullName>Sperm protamine P1</fullName>
    </recommendedName>
</protein>
<organism>
    <name type="scientific">Dasyurus geoffroii</name>
    <name type="common">Western quoll</name>
    <name type="synonym">Chuditch</name>
    <dbReference type="NCBI Taxonomy" id="63143"/>
    <lineage>
        <taxon>Eukaryota</taxon>
        <taxon>Metazoa</taxon>
        <taxon>Chordata</taxon>
        <taxon>Craniata</taxon>
        <taxon>Vertebrata</taxon>
        <taxon>Euteleostomi</taxon>
        <taxon>Mammalia</taxon>
        <taxon>Metatheria</taxon>
        <taxon>Dasyuromorphia</taxon>
        <taxon>Dasyuridae</taxon>
        <taxon>Dasyurus</taxon>
    </lineage>
</organism>
<proteinExistence type="evidence at transcript level"/>
<evidence type="ECO:0000256" key="1">
    <source>
        <dbReference type="SAM" id="MobiDB-lite"/>
    </source>
</evidence>
<evidence type="ECO:0000305" key="2"/>
<reference key="1">
    <citation type="journal article" date="1997" name="J. Mammal. Evol.">
        <title>Reconstructing the taxonomic radiation of dasyurine marsupials with cytochrome b, 12S rRNA, and protamine P1 gene trees.</title>
        <authorList>
            <person name="Krajewski C."/>
            <person name="Young J."/>
            <person name="Buckley L."/>
            <person name="Woolley P.A."/>
            <person name="Westerman M."/>
        </authorList>
    </citation>
    <scope>NUCLEOTIDE SEQUENCE [GENOMIC DNA]</scope>
</reference>
<name>HSP1_DASGE</name>
<feature type="chain" id="PRO_0000191462" description="Sperm protamine P1">
    <location>
        <begin position="1"/>
        <end position="62"/>
    </location>
</feature>
<feature type="region of interest" description="Disordered" evidence="1">
    <location>
        <begin position="1"/>
        <end position="62"/>
    </location>
</feature>
<dbReference type="EMBL" id="AF010274">
    <property type="protein sequence ID" value="AAB69304.1"/>
    <property type="molecule type" value="Genomic_DNA"/>
</dbReference>
<dbReference type="GO" id="GO:0000786">
    <property type="term" value="C:nucleosome"/>
    <property type="evidence" value="ECO:0007669"/>
    <property type="project" value="UniProtKB-KW"/>
</dbReference>
<dbReference type="GO" id="GO:0005634">
    <property type="term" value="C:nucleus"/>
    <property type="evidence" value="ECO:0007669"/>
    <property type="project" value="UniProtKB-SubCell"/>
</dbReference>
<dbReference type="GO" id="GO:0003677">
    <property type="term" value="F:DNA binding"/>
    <property type="evidence" value="ECO:0007669"/>
    <property type="project" value="UniProtKB-KW"/>
</dbReference>
<dbReference type="GO" id="GO:0030261">
    <property type="term" value="P:chromosome condensation"/>
    <property type="evidence" value="ECO:0007669"/>
    <property type="project" value="UniProtKB-KW"/>
</dbReference>
<dbReference type="GO" id="GO:0035092">
    <property type="term" value="P:sperm DNA condensation"/>
    <property type="evidence" value="ECO:0007669"/>
    <property type="project" value="InterPro"/>
</dbReference>
<dbReference type="InterPro" id="IPR000221">
    <property type="entry name" value="Protamine_P1"/>
</dbReference>
<dbReference type="PROSITE" id="PS00048">
    <property type="entry name" value="PROTAMINE_P1"/>
    <property type="match status" value="1"/>
</dbReference>
<accession>P67850</accession>
<accession>P42130</accession>
<accession>P42146</accession>
<comment type="function">
    <text>Protamines substitute for histones in the chromatin of sperm during the haploid phase of spermatogenesis. They compact sperm DNA into a highly condensed, stable and inactive complex.</text>
</comment>
<comment type="subcellular location">
    <subcellularLocation>
        <location>Nucleus</location>
    </subcellularLocation>
    <subcellularLocation>
        <location>Chromosome</location>
    </subcellularLocation>
</comment>
<comment type="tissue specificity">
    <text>Testis.</text>
</comment>
<comment type="similarity">
    <text evidence="2">Belongs to the protamine P1 family.</text>
</comment>